<accession>Q5QX64</accession>
<evidence type="ECO:0000255" key="1">
    <source>
        <dbReference type="HAMAP-Rule" id="MF_00906"/>
    </source>
</evidence>
<keyword id="KW-0131">Cell cycle</keyword>
<keyword id="KW-0132">Cell division</keyword>
<keyword id="KW-0963">Cytoplasm</keyword>
<keyword id="KW-1185">Reference proteome</keyword>
<keyword id="KW-0717">Septation</keyword>
<reference key="1">
    <citation type="journal article" date="2004" name="Proc. Natl. Acad. Sci. U.S.A.">
        <title>Genome sequence of the deep-sea gamma-proteobacterium Idiomarina loihiensis reveals amino acid fermentation as a source of carbon and energy.</title>
        <authorList>
            <person name="Hou S."/>
            <person name="Saw J.H."/>
            <person name="Lee K.S."/>
            <person name="Freitas T.A."/>
            <person name="Belisle C."/>
            <person name="Kawarabayasi Y."/>
            <person name="Donachie S.P."/>
            <person name="Pikina A."/>
            <person name="Galperin M.Y."/>
            <person name="Koonin E.V."/>
            <person name="Makarova K.S."/>
            <person name="Omelchenko M.V."/>
            <person name="Sorokin A."/>
            <person name="Wolf Y.I."/>
            <person name="Li Q.X."/>
            <person name="Keum Y.S."/>
            <person name="Campbell S."/>
            <person name="Denery J."/>
            <person name="Aizawa S."/>
            <person name="Shibata S."/>
            <person name="Malahoff A."/>
            <person name="Alam M."/>
        </authorList>
    </citation>
    <scope>NUCLEOTIDE SEQUENCE [LARGE SCALE GENOMIC DNA]</scope>
    <source>
        <strain>ATCC BAA-735 / DSM 15497 / L2-TR</strain>
    </source>
</reference>
<protein>
    <recommendedName>
        <fullName evidence="1">Cell division protein ZapC</fullName>
    </recommendedName>
</protein>
<gene>
    <name evidence="1" type="primary">zapC</name>
    <name type="ordered locus">IL1281</name>
</gene>
<proteinExistence type="inferred from homology"/>
<organism>
    <name type="scientific">Idiomarina loihiensis (strain ATCC BAA-735 / DSM 15497 / L2-TR)</name>
    <dbReference type="NCBI Taxonomy" id="283942"/>
    <lineage>
        <taxon>Bacteria</taxon>
        <taxon>Pseudomonadati</taxon>
        <taxon>Pseudomonadota</taxon>
        <taxon>Gammaproteobacteria</taxon>
        <taxon>Alteromonadales</taxon>
        <taxon>Idiomarinaceae</taxon>
        <taxon>Idiomarina</taxon>
    </lineage>
</organism>
<dbReference type="EMBL" id="AE017340">
    <property type="protein sequence ID" value="AAV82121.1"/>
    <property type="molecule type" value="Genomic_DNA"/>
</dbReference>
<dbReference type="RefSeq" id="WP_011234527.1">
    <property type="nucleotide sequence ID" value="NC_006512.1"/>
</dbReference>
<dbReference type="SMR" id="Q5QX64"/>
<dbReference type="STRING" id="283942.IL1281"/>
<dbReference type="DNASU" id="3174065"/>
<dbReference type="GeneID" id="41336456"/>
<dbReference type="KEGG" id="ilo:IL1281"/>
<dbReference type="eggNOG" id="ENOG502Z8AH">
    <property type="taxonomic scope" value="Bacteria"/>
</dbReference>
<dbReference type="HOGENOM" id="CLU_128248_0_0_6"/>
<dbReference type="OrthoDB" id="5765005at2"/>
<dbReference type="Proteomes" id="UP000001171">
    <property type="component" value="Chromosome"/>
</dbReference>
<dbReference type="GO" id="GO:0005737">
    <property type="term" value="C:cytoplasm"/>
    <property type="evidence" value="ECO:0007669"/>
    <property type="project" value="UniProtKB-SubCell"/>
</dbReference>
<dbReference type="GO" id="GO:0000917">
    <property type="term" value="P:division septum assembly"/>
    <property type="evidence" value="ECO:0007669"/>
    <property type="project" value="UniProtKB-KW"/>
</dbReference>
<dbReference type="GO" id="GO:0043093">
    <property type="term" value="P:FtsZ-dependent cytokinesis"/>
    <property type="evidence" value="ECO:0007669"/>
    <property type="project" value="UniProtKB-UniRule"/>
</dbReference>
<dbReference type="HAMAP" id="MF_00906">
    <property type="entry name" value="ZapC"/>
    <property type="match status" value="1"/>
</dbReference>
<dbReference type="InterPro" id="IPR009809">
    <property type="entry name" value="ZapC"/>
</dbReference>
<dbReference type="InterPro" id="IPR048372">
    <property type="entry name" value="ZapC_C"/>
</dbReference>
<dbReference type="InterPro" id="IPR048373">
    <property type="entry name" value="ZapC_N"/>
</dbReference>
<dbReference type="Pfam" id="PF07126">
    <property type="entry name" value="ZapC_C"/>
    <property type="match status" value="1"/>
</dbReference>
<dbReference type="Pfam" id="PF21083">
    <property type="entry name" value="ZapC_N"/>
    <property type="match status" value="1"/>
</dbReference>
<comment type="function">
    <text evidence="1">Contributes to the efficiency of the cell division process by stabilizing the polymeric form of the cell division protein FtsZ. Acts by promoting interactions between FtsZ protofilaments and suppressing the GTPase activity of FtsZ.</text>
</comment>
<comment type="subunit">
    <text evidence="1">Interacts directly with FtsZ.</text>
</comment>
<comment type="subcellular location">
    <subcellularLocation>
        <location evidence="1">Cytoplasm</location>
    </subcellularLocation>
</comment>
<comment type="similarity">
    <text evidence="1">Belongs to the ZapC family.</text>
</comment>
<feature type="chain" id="PRO_0000413779" description="Cell division protein ZapC">
    <location>
        <begin position="1"/>
        <end position="184"/>
    </location>
</feature>
<name>ZAPC_IDILO</name>
<sequence>MESESHWLWLFNTESGKLSVKLSDTDVFDTPYKPSQLVNIHFNEQMMDIEDATTFQIVSETLEAYPADKMPCAPQNAALNATAWCRFGRPQMPQSWHFQKSDISEWPLERRLCELNSGFDQGLFLILDTDDEFATCLLLSEGMQLSAIKSLRQYHVIKVTLNRLLPATVDLALSAQSNWGQQLA</sequence>